<protein>
    <recommendedName>
        <fullName evidence="1">Peptide methionine sulfoxide reductase MsrB</fullName>
        <ecNumber evidence="1">1.8.4.12</ecNumber>
    </recommendedName>
    <alternativeName>
        <fullName evidence="1">Peptide-methionine (R)-S-oxide reductase</fullName>
    </alternativeName>
</protein>
<gene>
    <name evidence="1" type="primary">msrB</name>
    <name type="ordered locus">BMA1441</name>
</gene>
<accession>Q62JM6</accession>
<proteinExistence type="inferred from homology"/>
<sequence length="143" mass="16171">MSGDRDDPRYPYPKDDAELRRRLTPMQYEVTQHAATEPPFTGEYTDTEDAGIYHCVVCGTALFESGAKFHSGCGWPSYFKPIDGEVIDEKMDYTHGMTRVEVRCNQCGAHLGHVFEDGPRDKTGLRYCINSAALNFEAKPERK</sequence>
<comment type="catalytic activity">
    <reaction evidence="1">
        <text>L-methionyl-[protein] + [thioredoxin]-disulfide + H2O = L-methionyl-(R)-S-oxide-[protein] + [thioredoxin]-dithiol</text>
        <dbReference type="Rhea" id="RHEA:24164"/>
        <dbReference type="Rhea" id="RHEA-COMP:10698"/>
        <dbReference type="Rhea" id="RHEA-COMP:10700"/>
        <dbReference type="Rhea" id="RHEA-COMP:12313"/>
        <dbReference type="Rhea" id="RHEA-COMP:12314"/>
        <dbReference type="ChEBI" id="CHEBI:15377"/>
        <dbReference type="ChEBI" id="CHEBI:16044"/>
        <dbReference type="ChEBI" id="CHEBI:29950"/>
        <dbReference type="ChEBI" id="CHEBI:45764"/>
        <dbReference type="ChEBI" id="CHEBI:50058"/>
        <dbReference type="EC" id="1.8.4.12"/>
    </reaction>
</comment>
<comment type="cofactor">
    <cofactor evidence="1">
        <name>Zn(2+)</name>
        <dbReference type="ChEBI" id="CHEBI:29105"/>
    </cofactor>
    <text evidence="1">Binds 1 zinc ion per subunit. The zinc ion is important for the structural integrity of the protein.</text>
</comment>
<comment type="similarity">
    <text evidence="1">Belongs to the MsrB Met sulfoxide reductase family.</text>
</comment>
<dbReference type="EC" id="1.8.4.12" evidence="1"/>
<dbReference type="EMBL" id="CP000010">
    <property type="protein sequence ID" value="AAU47664.1"/>
    <property type="molecule type" value="Genomic_DNA"/>
</dbReference>
<dbReference type="RefSeq" id="WP_004193880.1">
    <property type="nucleotide sequence ID" value="NC_006348.1"/>
</dbReference>
<dbReference type="RefSeq" id="YP_103093.1">
    <property type="nucleotide sequence ID" value="NC_006348.1"/>
</dbReference>
<dbReference type="SMR" id="Q62JM6"/>
<dbReference type="GeneID" id="92979175"/>
<dbReference type="KEGG" id="bma:BMA1441"/>
<dbReference type="PATRIC" id="fig|243160.12.peg.1482"/>
<dbReference type="eggNOG" id="COG0229">
    <property type="taxonomic scope" value="Bacteria"/>
</dbReference>
<dbReference type="HOGENOM" id="CLU_031040_8_5_4"/>
<dbReference type="Proteomes" id="UP000006693">
    <property type="component" value="Chromosome 1"/>
</dbReference>
<dbReference type="GO" id="GO:0005737">
    <property type="term" value="C:cytoplasm"/>
    <property type="evidence" value="ECO:0007669"/>
    <property type="project" value="TreeGrafter"/>
</dbReference>
<dbReference type="GO" id="GO:0033743">
    <property type="term" value="F:peptide-methionine (R)-S-oxide reductase activity"/>
    <property type="evidence" value="ECO:0007669"/>
    <property type="project" value="UniProtKB-UniRule"/>
</dbReference>
<dbReference type="GO" id="GO:0008270">
    <property type="term" value="F:zinc ion binding"/>
    <property type="evidence" value="ECO:0007669"/>
    <property type="project" value="UniProtKB-UniRule"/>
</dbReference>
<dbReference type="GO" id="GO:0030091">
    <property type="term" value="P:protein repair"/>
    <property type="evidence" value="ECO:0007669"/>
    <property type="project" value="InterPro"/>
</dbReference>
<dbReference type="GO" id="GO:0006979">
    <property type="term" value="P:response to oxidative stress"/>
    <property type="evidence" value="ECO:0007669"/>
    <property type="project" value="InterPro"/>
</dbReference>
<dbReference type="FunFam" id="2.170.150.20:FF:000003">
    <property type="entry name" value="Peptide methionine sulfoxide reductase MsrB"/>
    <property type="match status" value="1"/>
</dbReference>
<dbReference type="Gene3D" id="2.170.150.20">
    <property type="entry name" value="Peptide methionine sulfoxide reductase"/>
    <property type="match status" value="1"/>
</dbReference>
<dbReference type="HAMAP" id="MF_01400">
    <property type="entry name" value="MsrB"/>
    <property type="match status" value="1"/>
</dbReference>
<dbReference type="InterPro" id="IPR028427">
    <property type="entry name" value="Met_Sox_Rdtase_MsrB"/>
</dbReference>
<dbReference type="InterPro" id="IPR002579">
    <property type="entry name" value="Met_Sox_Rdtase_MsrB_dom"/>
</dbReference>
<dbReference type="InterPro" id="IPR011057">
    <property type="entry name" value="Mss4-like_sf"/>
</dbReference>
<dbReference type="NCBIfam" id="TIGR00357">
    <property type="entry name" value="peptide-methionine (R)-S-oxide reductase MsrB"/>
    <property type="match status" value="1"/>
</dbReference>
<dbReference type="PANTHER" id="PTHR10173">
    <property type="entry name" value="METHIONINE SULFOXIDE REDUCTASE"/>
    <property type="match status" value="1"/>
</dbReference>
<dbReference type="PANTHER" id="PTHR10173:SF52">
    <property type="entry name" value="METHIONINE-R-SULFOXIDE REDUCTASE B1"/>
    <property type="match status" value="1"/>
</dbReference>
<dbReference type="Pfam" id="PF01641">
    <property type="entry name" value="SelR"/>
    <property type="match status" value="1"/>
</dbReference>
<dbReference type="SUPFAM" id="SSF51316">
    <property type="entry name" value="Mss4-like"/>
    <property type="match status" value="1"/>
</dbReference>
<dbReference type="PROSITE" id="PS51790">
    <property type="entry name" value="MSRB"/>
    <property type="match status" value="1"/>
</dbReference>
<evidence type="ECO:0000255" key="1">
    <source>
        <dbReference type="HAMAP-Rule" id="MF_01400"/>
    </source>
</evidence>
<evidence type="ECO:0000255" key="2">
    <source>
        <dbReference type="PROSITE-ProRule" id="PRU01126"/>
    </source>
</evidence>
<name>MSRB_BURMA</name>
<feature type="chain" id="PRO_1000145358" description="Peptide methionine sulfoxide reductase MsrB">
    <location>
        <begin position="1"/>
        <end position="143"/>
    </location>
</feature>
<feature type="domain" description="MsrB" evidence="2">
    <location>
        <begin position="16"/>
        <end position="139"/>
    </location>
</feature>
<feature type="active site" description="Nucleophile" evidence="2">
    <location>
        <position position="128"/>
    </location>
</feature>
<feature type="binding site" evidence="2">
    <location>
        <position position="55"/>
    </location>
    <ligand>
        <name>Zn(2+)</name>
        <dbReference type="ChEBI" id="CHEBI:29105"/>
    </ligand>
</feature>
<feature type="binding site" evidence="2">
    <location>
        <position position="58"/>
    </location>
    <ligand>
        <name>Zn(2+)</name>
        <dbReference type="ChEBI" id="CHEBI:29105"/>
    </ligand>
</feature>
<feature type="binding site" evidence="2">
    <location>
        <position position="104"/>
    </location>
    <ligand>
        <name>Zn(2+)</name>
        <dbReference type="ChEBI" id="CHEBI:29105"/>
    </ligand>
</feature>
<feature type="binding site" evidence="2">
    <location>
        <position position="107"/>
    </location>
    <ligand>
        <name>Zn(2+)</name>
        <dbReference type="ChEBI" id="CHEBI:29105"/>
    </ligand>
</feature>
<organism>
    <name type="scientific">Burkholderia mallei (strain ATCC 23344)</name>
    <dbReference type="NCBI Taxonomy" id="243160"/>
    <lineage>
        <taxon>Bacteria</taxon>
        <taxon>Pseudomonadati</taxon>
        <taxon>Pseudomonadota</taxon>
        <taxon>Betaproteobacteria</taxon>
        <taxon>Burkholderiales</taxon>
        <taxon>Burkholderiaceae</taxon>
        <taxon>Burkholderia</taxon>
        <taxon>pseudomallei group</taxon>
    </lineage>
</organism>
<keyword id="KW-0479">Metal-binding</keyword>
<keyword id="KW-0560">Oxidoreductase</keyword>
<keyword id="KW-1185">Reference proteome</keyword>
<keyword id="KW-0862">Zinc</keyword>
<reference key="1">
    <citation type="journal article" date="2004" name="Proc. Natl. Acad. Sci. U.S.A.">
        <title>Structural flexibility in the Burkholderia mallei genome.</title>
        <authorList>
            <person name="Nierman W.C."/>
            <person name="DeShazer D."/>
            <person name="Kim H.S."/>
            <person name="Tettelin H."/>
            <person name="Nelson K.E."/>
            <person name="Feldblyum T.V."/>
            <person name="Ulrich R.L."/>
            <person name="Ronning C.M."/>
            <person name="Brinkac L.M."/>
            <person name="Daugherty S.C."/>
            <person name="Davidsen T.D."/>
            <person name="DeBoy R.T."/>
            <person name="Dimitrov G."/>
            <person name="Dodson R.J."/>
            <person name="Durkin A.S."/>
            <person name="Gwinn M.L."/>
            <person name="Haft D.H."/>
            <person name="Khouri H.M."/>
            <person name="Kolonay J.F."/>
            <person name="Madupu R."/>
            <person name="Mohammoud Y."/>
            <person name="Nelson W.C."/>
            <person name="Radune D."/>
            <person name="Romero C.M."/>
            <person name="Sarria S."/>
            <person name="Selengut J."/>
            <person name="Shamblin C."/>
            <person name="Sullivan S.A."/>
            <person name="White O."/>
            <person name="Yu Y."/>
            <person name="Zafar N."/>
            <person name="Zhou L."/>
            <person name="Fraser C.M."/>
        </authorList>
    </citation>
    <scope>NUCLEOTIDE SEQUENCE [LARGE SCALE GENOMIC DNA]</scope>
    <source>
        <strain>ATCC 23344</strain>
    </source>
</reference>